<evidence type="ECO:0000250" key="1"/>
<evidence type="ECO:0000255" key="2">
    <source>
        <dbReference type="PROSITE-ProRule" id="PRU10009"/>
    </source>
</evidence>
<evidence type="ECO:0000305" key="3"/>
<feature type="chain" id="PRO_0000145553" description="Glyceraldehyde-3-phosphate dehydrogenase">
    <location>
        <begin position="1"/>
        <end position="335"/>
    </location>
</feature>
<feature type="active site" description="Nucleophile" evidence="2">
    <location>
        <position position="151"/>
    </location>
</feature>
<feature type="binding site" evidence="1">
    <location>
        <begin position="12"/>
        <end position="13"/>
    </location>
    <ligand>
        <name>NAD(+)</name>
        <dbReference type="ChEBI" id="CHEBI:57540"/>
    </ligand>
</feature>
<feature type="binding site" evidence="1">
    <location>
        <position position="34"/>
    </location>
    <ligand>
        <name>NAD(+)</name>
        <dbReference type="ChEBI" id="CHEBI:57540"/>
    </ligand>
</feature>
<feature type="binding site" evidence="1">
    <location>
        <position position="79"/>
    </location>
    <ligand>
        <name>NAD(+)</name>
        <dbReference type="ChEBI" id="CHEBI:57540"/>
    </ligand>
</feature>
<feature type="binding site" evidence="1">
    <location>
        <begin position="150"/>
        <end position="152"/>
    </location>
    <ligand>
        <name>D-glyceraldehyde 3-phosphate</name>
        <dbReference type="ChEBI" id="CHEBI:59776"/>
    </ligand>
</feature>
<feature type="binding site" evidence="1">
    <location>
        <position position="181"/>
    </location>
    <ligand>
        <name>D-glyceraldehyde 3-phosphate</name>
        <dbReference type="ChEBI" id="CHEBI:59776"/>
    </ligand>
</feature>
<feature type="binding site" evidence="1">
    <location>
        <begin position="210"/>
        <end position="211"/>
    </location>
    <ligand>
        <name>D-glyceraldehyde 3-phosphate</name>
        <dbReference type="ChEBI" id="CHEBI:59776"/>
    </ligand>
</feature>
<feature type="binding site" evidence="1">
    <location>
        <position position="233"/>
    </location>
    <ligand>
        <name>D-glyceraldehyde 3-phosphate</name>
        <dbReference type="ChEBI" id="CHEBI:59776"/>
    </ligand>
</feature>
<feature type="binding site" evidence="1">
    <location>
        <position position="315"/>
    </location>
    <ligand>
        <name>NAD(+)</name>
        <dbReference type="ChEBI" id="CHEBI:57540"/>
    </ligand>
</feature>
<feature type="site" description="Activates thiol group during catalysis" evidence="1">
    <location>
        <position position="178"/>
    </location>
</feature>
<gene>
    <name type="primary">GPD</name>
    <name type="ordered locus">DEHA2F04796g</name>
</gene>
<organism>
    <name type="scientific">Debaryomyces hansenii (strain ATCC 36239 / CBS 767 / BCRC 21394 / JCM 1990 / NBRC 0083 / IGC 2968)</name>
    <name type="common">Yeast</name>
    <name type="synonym">Torulaspora hansenii</name>
    <dbReference type="NCBI Taxonomy" id="284592"/>
    <lineage>
        <taxon>Eukaryota</taxon>
        <taxon>Fungi</taxon>
        <taxon>Dikarya</taxon>
        <taxon>Ascomycota</taxon>
        <taxon>Saccharomycotina</taxon>
        <taxon>Pichiomycetes</taxon>
        <taxon>Debaryomycetaceae</taxon>
        <taxon>Debaryomyces</taxon>
    </lineage>
</organism>
<protein>
    <recommendedName>
        <fullName>Glyceraldehyde-3-phosphate dehydrogenase</fullName>
        <shortName>GAPDH</shortName>
        <ecNumber>1.2.1.12</ecNumber>
    </recommendedName>
</protein>
<accession>Q6BMK0</accession>
<name>G3P_DEBHA</name>
<comment type="catalytic activity">
    <reaction evidence="2">
        <text>D-glyceraldehyde 3-phosphate + phosphate + NAD(+) = (2R)-3-phospho-glyceroyl phosphate + NADH + H(+)</text>
        <dbReference type="Rhea" id="RHEA:10300"/>
        <dbReference type="ChEBI" id="CHEBI:15378"/>
        <dbReference type="ChEBI" id="CHEBI:43474"/>
        <dbReference type="ChEBI" id="CHEBI:57540"/>
        <dbReference type="ChEBI" id="CHEBI:57604"/>
        <dbReference type="ChEBI" id="CHEBI:57945"/>
        <dbReference type="ChEBI" id="CHEBI:59776"/>
        <dbReference type="EC" id="1.2.1.12"/>
    </reaction>
</comment>
<comment type="pathway">
    <text>Carbohydrate degradation; glycolysis; pyruvate from D-glyceraldehyde 3-phosphate: step 1/5.</text>
</comment>
<comment type="subunit">
    <text evidence="1">Homotetramer.</text>
</comment>
<comment type="subcellular location">
    <subcellularLocation>
        <location evidence="1">Cytoplasm</location>
    </subcellularLocation>
</comment>
<comment type="similarity">
    <text evidence="3">Belongs to the glyceraldehyde-3-phosphate dehydrogenase family.</text>
</comment>
<reference key="1">
    <citation type="journal article" date="2004" name="Nature">
        <title>Genome evolution in yeasts.</title>
        <authorList>
            <person name="Dujon B."/>
            <person name="Sherman D."/>
            <person name="Fischer G."/>
            <person name="Durrens P."/>
            <person name="Casaregola S."/>
            <person name="Lafontaine I."/>
            <person name="de Montigny J."/>
            <person name="Marck C."/>
            <person name="Neuveglise C."/>
            <person name="Talla E."/>
            <person name="Goffard N."/>
            <person name="Frangeul L."/>
            <person name="Aigle M."/>
            <person name="Anthouard V."/>
            <person name="Babour A."/>
            <person name="Barbe V."/>
            <person name="Barnay S."/>
            <person name="Blanchin S."/>
            <person name="Beckerich J.-M."/>
            <person name="Beyne E."/>
            <person name="Bleykasten C."/>
            <person name="Boisrame A."/>
            <person name="Boyer J."/>
            <person name="Cattolico L."/>
            <person name="Confanioleri F."/>
            <person name="de Daruvar A."/>
            <person name="Despons L."/>
            <person name="Fabre E."/>
            <person name="Fairhead C."/>
            <person name="Ferry-Dumazet H."/>
            <person name="Groppi A."/>
            <person name="Hantraye F."/>
            <person name="Hennequin C."/>
            <person name="Jauniaux N."/>
            <person name="Joyet P."/>
            <person name="Kachouri R."/>
            <person name="Kerrest A."/>
            <person name="Koszul R."/>
            <person name="Lemaire M."/>
            <person name="Lesur I."/>
            <person name="Ma L."/>
            <person name="Muller H."/>
            <person name="Nicaud J.-M."/>
            <person name="Nikolski M."/>
            <person name="Oztas S."/>
            <person name="Ozier-Kalogeropoulos O."/>
            <person name="Pellenz S."/>
            <person name="Potier S."/>
            <person name="Richard G.-F."/>
            <person name="Straub M.-L."/>
            <person name="Suleau A."/>
            <person name="Swennen D."/>
            <person name="Tekaia F."/>
            <person name="Wesolowski-Louvel M."/>
            <person name="Westhof E."/>
            <person name="Wirth B."/>
            <person name="Zeniou-Meyer M."/>
            <person name="Zivanovic Y."/>
            <person name="Bolotin-Fukuhara M."/>
            <person name="Thierry A."/>
            <person name="Bouchier C."/>
            <person name="Caudron B."/>
            <person name="Scarpelli C."/>
            <person name="Gaillardin C."/>
            <person name="Weissenbach J."/>
            <person name="Wincker P."/>
            <person name="Souciet J.-L."/>
        </authorList>
    </citation>
    <scope>NUCLEOTIDE SEQUENCE [LARGE SCALE GENOMIC DNA]</scope>
    <source>
        <strain>ATCC 36239 / CBS 767 / BCRC 21394 / JCM 1990 / NBRC 0083 / IGC 2968</strain>
    </source>
</reference>
<dbReference type="EC" id="1.2.1.12"/>
<dbReference type="EMBL" id="CR382138">
    <property type="protein sequence ID" value="CAG88895.1"/>
    <property type="molecule type" value="Genomic_DNA"/>
</dbReference>
<dbReference type="RefSeq" id="XP_460571.1">
    <property type="nucleotide sequence ID" value="XM_460571.1"/>
</dbReference>
<dbReference type="SMR" id="Q6BMK0"/>
<dbReference type="FunCoup" id="Q6BMK0">
    <property type="interactions" value="1351"/>
</dbReference>
<dbReference type="STRING" id="284592.Q6BMK0"/>
<dbReference type="GeneID" id="2903236"/>
<dbReference type="KEGG" id="dha:DEHA2F04796g"/>
<dbReference type="eggNOG" id="KOG0657">
    <property type="taxonomic scope" value="Eukaryota"/>
</dbReference>
<dbReference type="HOGENOM" id="CLU_030140_0_3_1"/>
<dbReference type="InParanoid" id="Q6BMK0"/>
<dbReference type="OMA" id="YGYTCNM"/>
<dbReference type="OrthoDB" id="1152826at2759"/>
<dbReference type="UniPathway" id="UPA00109">
    <property type="reaction ID" value="UER00184"/>
</dbReference>
<dbReference type="Proteomes" id="UP000000599">
    <property type="component" value="Chromosome F"/>
</dbReference>
<dbReference type="GO" id="GO:0005829">
    <property type="term" value="C:cytosol"/>
    <property type="evidence" value="ECO:0007669"/>
    <property type="project" value="UniProtKB-ARBA"/>
</dbReference>
<dbReference type="GO" id="GO:0004365">
    <property type="term" value="F:glyceraldehyde-3-phosphate dehydrogenase (NAD+) (phosphorylating) activity"/>
    <property type="evidence" value="ECO:0007669"/>
    <property type="project" value="UniProtKB-EC"/>
</dbReference>
<dbReference type="GO" id="GO:0051287">
    <property type="term" value="F:NAD binding"/>
    <property type="evidence" value="ECO:0007669"/>
    <property type="project" value="InterPro"/>
</dbReference>
<dbReference type="GO" id="GO:0050661">
    <property type="term" value="F:NADP binding"/>
    <property type="evidence" value="ECO:0007669"/>
    <property type="project" value="InterPro"/>
</dbReference>
<dbReference type="GO" id="GO:0006006">
    <property type="term" value="P:glucose metabolic process"/>
    <property type="evidence" value="ECO:0007669"/>
    <property type="project" value="InterPro"/>
</dbReference>
<dbReference type="GO" id="GO:0006096">
    <property type="term" value="P:glycolytic process"/>
    <property type="evidence" value="ECO:0007669"/>
    <property type="project" value="UniProtKB-UniPathway"/>
</dbReference>
<dbReference type="CDD" id="cd18126">
    <property type="entry name" value="GAPDH_I_C"/>
    <property type="match status" value="1"/>
</dbReference>
<dbReference type="CDD" id="cd05214">
    <property type="entry name" value="GAPDH_I_N"/>
    <property type="match status" value="1"/>
</dbReference>
<dbReference type="FunFam" id="3.30.360.10:FF:000001">
    <property type="entry name" value="Glyceraldehyde-3-phosphate dehydrogenase"/>
    <property type="match status" value="1"/>
</dbReference>
<dbReference type="FunFam" id="3.40.50.720:FF:000020">
    <property type="entry name" value="Glyceraldehyde-3-phosphate dehydrogenase"/>
    <property type="match status" value="1"/>
</dbReference>
<dbReference type="Gene3D" id="3.30.360.10">
    <property type="entry name" value="Dihydrodipicolinate Reductase, domain 2"/>
    <property type="match status" value="1"/>
</dbReference>
<dbReference type="Gene3D" id="3.40.50.720">
    <property type="entry name" value="NAD(P)-binding Rossmann-like Domain"/>
    <property type="match status" value="1"/>
</dbReference>
<dbReference type="InterPro" id="IPR020831">
    <property type="entry name" value="GlycerAld/Erythrose_P_DH"/>
</dbReference>
<dbReference type="InterPro" id="IPR020830">
    <property type="entry name" value="GlycerAld_3-P_DH_AS"/>
</dbReference>
<dbReference type="InterPro" id="IPR020829">
    <property type="entry name" value="GlycerAld_3-P_DH_cat"/>
</dbReference>
<dbReference type="InterPro" id="IPR020828">
    <property type="entry name" value="GlycerAld_3-P_DH_NAD(P)-bd"/>
</dbReference>
<dbReference type="InterPro" id="IPR006424">
    <property type="entry name" value="Glyceraldehyde-3-P_DH_1"/>
</dbReference>
<dbReference type="InterPro" id="IPR036291">
    <property type="entry name" value="NAD(P)-bd_dom_sf"/>
</dbReference>
<dbReference type="NCBIfam" id="TIGR01534">
    <property type="entry name" value="GAPDH-I"/>
    <property type="match status" value="1"/>
</dbReference>
<dbReference type="PANTHER" id="PTHR10836">
    <property type="entry name" value="GLYCERALDEHYDE 3-PHOSPHATE DEHYDROGENASE"/>
    <property type="match status" value="1"/>
</dbReference>
<dbReference type="PANTHER" id="PTHR10836:SF76">
    <property type="entry name" value="GLYCERALDEHYDE-3-PHOSPHATE DEHYDROGENASE-RELATED"/>
    <property type="match status" value="1"/>
</dbReference>
<dbReference type="Pfam" id="PF02800">
    <property type="entry name" value="Gp_dh_C"/>
    <property type="match status" value="1"/>
</dbReference>
<dbReference type="Pfam" id="PF00044">
    <property type="entry name" value="Gp_dh_N"/>
    <property type="match status" value="1"/>
</dbReference>
<dbReference type="PIRSF" id="PIRSF000149">
    <property type="entry name" value="GAP_DH"/>
    <property type="match status" value="1"/>
</dbReference>
<dbReference type="PRINTS" id="PR00078">
    <property type="entry name" value="G3PDHDRGNASE"/>
</dbReference>
<dbReference type="SMART" id="SM00846">
    <property type="entry name" value="Gp_dh_N"/>
    <property type="match status" value="1"/>
</dbReference>
<dbReference type="SUPFAM" id="SSF55347">
    <property type="entry name" value="Glyceraldehyde-3-phosphate dehydrogenase-like, C-terminal domain"/>
    <property type="match status" value="1"/>
</dbReference>
<dbReference type="SUPFAM" id="SSF51735">
    <property type="entry name" value="NAD(P)-binding Rossmann-fold domains"/>
    <property type="match status" value="1"/>
</dbReference>
<dbReference type="PROSITE" id="PS00071">
    <property type="entry name" value="GAPDH"/>
    <property type="match status" value="1"/>
</dbReference>
<proteinExistence type="inferred from homology"/>
<sequence length="335" mass="35834">MAITIGINGFGRIGRLVLRIALQRSDIKVVAVNDPFIAPEYAAYMFKYDSTHGRYKGEVTSKDDSLVIDGQSIKVFGEKDPASIPWGKAGVDYVIESTGVFTTTEGAQKHIDGGAKKVIITAPSSDAPMFVVGVNEQKYTPDLKIVSNASCTTNCLAPLAKVINDKFGIEEGLMTTVHSITATQKTVDGPSHKDWRGGRTASGNIIPSSTGAAKAVGKVIPELNGKLTGMSLRVPTVDVSVVDLTVRLKKSATYEEISEAIKAASNGELKGILGYTEDAVVSTDFLGSDYSSIFDQKAGILLSPTFVKLISWYDNEFGYSTRVVDLLEHVAKASN</sequence>
<keyword id="KW-0963">Cytoplasm</keyword>
<keyword id="KW-0324">Glycolysis</keyword>
<keyword id="KW-0520">NAD</keyword>
<keyword id="KW-0560">Oxidoreductase</keyword>
<keyword id="KW-1185">Reference proteome</keyword>